<feature type="chain" id="PRO_1000166370" description="Large ribosomal subunit protein uL16">
    <location>
        <begin position="1"/>
        <end position="138"/>
    </location>
</feature>
<feature type="region of interest" description="Disordered" evidence="2">
    <location>
        <begin position="1"/>
        <end position="22"/>
    </location>
</feature>
<feature type="compositionally biased region" description="Basic residues" evidence="2">
    <location>
        <begin position="1"/>
        <end position="17"/>
    </location>
</feature>
<organism>
    <name type="scientific">Mycobacterium leprae (strain Br4923)</name>
    <dbReference type="NCBI Taxonomy" id="561304"/>
    <lineage>
        <taxon>Bacteria</taxon>
        <taxon>Bacillati</taxon>
        <taxon>Actinomycetota</taxon>
        <taxon>Actinomycetes</taxon>
        <taxon>Mycobacteriales</taxon>
        <taxon>Mycobacteriaceae</taxon>
        <taxon>Mycobacterium</taxon>
    </lineage>
</organism>
<name>RL16_MYCLB</name>
<comment type="function">
    <text evidence="1">Binds 23S rRNA and is also seen to make contacts with the A and possibly P site tRNAs.</text>
</comment>
<comment type="subunit">
    <text evidence="1">Part of the 50S ribosomal subunit.</text>
</comment>
<comment type="similarity">
    <text evidence="1">Belongs to the universal ribosomal protein uL16 family.</text>
</comment>
<proteinExistence type="inferred from homology"/>
<sequence>MLIPRKVKHRKQHHPRQRGIASGGTKVNFGDYGIQALEHAYVTNRQIESARIAINRHIKRGGKVWINIFPDRPLTKKPAETRMGSGKGSPEWWVVNVKPGRVLFELSYPNEQTARAALTRAIHKLPIKARIVTREEQF</sequence>
<evidence type="ECO:0000255" key="1">
    <source>
        <dbReference type="HAMAP-Rule" id="MF_01342"/>
    </source>
</evidence>
<evidence type="ECO:0000256" key="2">
    <source>
        <dbReference type="SAM" id="MobiDB-lite"/>
    </source>
</evidence>
<evidence type="ECO:0000305" key="3"/>
<dbReference type="EMBL" id="FM211192">
    <property type="protein sequence ID" value="CAR71952.1"/>
    <property type="molecule type" value="Genomic_DNA"/>
</dbReference>
<dbReference type="SMR" id="B8ZSB2"/>
<dbReference type="KEGG" id="mlb:MLBr01856"/>
<dbReference type="HOGENOM" id="CLU_078858_2_1_11"/>
<dbReference type="Proteomes" id="UP000006900">
    <property type="component" value="Chromosome"/>
</dbReference>
<dbReference type="GO" id="GO:0022625">
    <property type="term" value="C:cytosolic large ribosomal subunit"/>
    <property type="evidence" value="ECO:0007669"/>
    <property type="project" value="TreeGrafter"/>
</dbReference>
<dbReference type="GO" id="GO:0019843">
    <property type="term" value="F:rRNA binding"/>
    <property type="evidence" value="ECO:0007669"/>
    <property type="project" value="UniProtKB-UniRule"/>
</dbReference>
<dbReference type="GO" id="GO:0003735">
    <property type="term" value="F:structural constituent of ribosome"/>
    <property type="evidence" value="ECO:0007669"/>
    <property type="project" value="InterPro"/>
</dbReference>
<dbReference type="GO" id="GO:0000049">
    <property type="term" value="F:tRNA binding"/>
    <property type="evidence" value="ECO:0007669"/>
    <property type="project" value="UniProtKB-KW"/>
</dbReference>
<dbReference type="GO" id="GO:0006412">
    <property type="term" value="P:translation"/>
    <property type="evidence" value="ECO:0007669"/>
    <property type="project" value="UniProtKB-UniRule"/>
</dbReference>
<dbReference type="CDD" id="cd01433">
    <property type="entry name" value="Ribosomal_L16_L10e"/>
    <property type="match status" value="1"/>
</dbReference>
<dbReference type="FunFam" id="3.90.1170.10:FF:000001">
    <property type="entry name" value="50S ribosomal protein L16"/>
    <property type="match status" value="1"/>
</dbReference>
<dbReference type="Gene3D" id="3.90.1170.10">
    <property type="entry name" value="Ribosomal protein L10e/L16"/>
    <property type="match status" value="1"/>
</dbReference>
<dbReference type="HAMAP" id="MF_01342">
    <property type="entry name" value="Ribosomal_uL16"/>
    <property type="match status" value="1"/>
</dbReference>
<dbReference type="InterPro" id="IPR047873">
    <property type="entry name" value="Ribosomal_uL16"/>
</dbReference>
<dbReference type="InterPro" id="IPR000114">
    <property type="entry name" value="Ribosomal_uL16_bact-type"/>
</dbReference>
<dbReference type="InterPro" id="IPR020798">
    <property type="entry name" value="Ribosomal_uL16_CS"/>
</dbReference>
<dbReference type="InterPro" id="IPR016180">
    <property type="entry name" value="Ribosomal_uL16_dom"/>
</dbReference>
<dbReference type="InterPro" id="IPR036920">
    <property type="entry name" value="Ribosomal_uL16_sf"/>
</dbReference>
<dbReference type="NCBIfam" id="TIGR01164">
    <property type="entry name" value="rplP_bact"/>
    <property type="match status" value="1"/>
</dbReference>
<dbReference type="PANTHER" id="PTHR12220">
    <property type="entry name" value="50S/60S RIBOSOMAL PROTEIN L16"/>
    <property type="match status" value="1"/>
</dbReference>
<dbReference type="PANTHER" id="PTHR12220:SF13">
    <property type="entry name" value="LARGE RIBOSOMAL SUBUNIT PROTEIN UL16M"/>
    <property type="match status" value="1"/>
</dbReference>
<dbReference type="Pfam" id="PF00252">
    <property type="entry name" value="Ribosomal_L16"/>
    <property type="match status" value="1"/>
</dbReference>
<dbReference type="PRINTS" id="PR00060">
    <property type="entry name" value="RIBOSOMALL16"/>
</dbReference>
<dbReference type="SUPFAM" id="SSF54686">
    <property type="entry name" value="Ribosomal protein L16p/L10e"/>
    <property type="match status" value="1"/>
</dbReference>
<dbReference type="PROSITE" id="PS00586">
    <property type="entry name" value="RIBOSOMAL_L16_1"/>
    <property type="match status" value="1"/>
</dbReference>
<dbReference type="PROSITE" id="PS00701">
    <property type="entry name" value="RIBOSOMAL_L16_2"/>
    <property type="match status" value="1"/>
</dbReference>
<keyword id="KW-0687">Ribonucleoprotein</keyword>
<keyword id="KW-0689">Ribosomal protein</keyword>
<keyword id="KW-0694">RNA-binding</keyword>
<keyword id="KW-0699">rRNA-binding</keyword>
<keyword id="KW-0820">tRNA-binding</keyword>
<reference key="1">
    <citation type="journal article" date="2009" name="Nat. Genet.">
        <title>Comparative genomic and phylogeographic analysis of Mycobacterium leprae.</title>
        <authorList>
            <person name="Monot M."/>
            <person name="Honore N."/>
            <person name="Garnier T."/>
            <person name="Zidane N."/>
            <person name="Sherafi D."/>
            <person name="Paniz-Mondolfi A."/>
            <person name="Matsuoka M."/>
            <person name="Taylor G.M."/>
            <person name="Donoghue H.D."/>
            <person name="Bouwman A."/>
            <person name="Mays S."/>
            <person name="Watson C."/>
            <person name="Lockwood D."/>
            <person name="Khamispour A."/>
            <person name="Dowlati Y."/>
            <person name="Jianping S."/>
            <person name="Rea T.H."/>
            <person name="Vera-Cabrera L."/>
            <person name="Stefani M.M."/>
            <person name="Banu S."/>
            <person name="Macdonald M."/>
            <person name="Sapkota B.R."/>
            <person name="Spencer J.S."/>
            <person name="Thomas J."/>
            <person name="Harshman K."/>
            <person name="Singh P."/>
            <person name="Busso P."/>
            <person name="Gattiker A."/>
            <person name="Rougemont J."/>
            <person name="Brennan P.J."/>
            <person name="Cole S.T."/>
        </authorList>
    </citation>
    <scope>NUCLEOTIDE SEQUENCE [LARGE SCALE GENOMIC DNA]</scope>
    <source>
        <strain>Br4923</strain>
    </source>
</reference>
<gene>
    <name evidence="1" type="primary">rplP</name>
    <name type="ordered locus">MLBr01856</name>
</gene>
<protein>
    <recommendedName>
        <fullName evidence="1">Large ribosomal subunit protein uL16</fullName>
    </recommendedName>
    <alternativeName>
        <fullName evidence="3">50S ribosomal protein L16</fullName>
    </alternativeName>
</protein>
<accession>B8ZSB2</accession>